<dbReference type="EMBL" id="BX649296">
    <property type="protein sequence ID" value="CAK04748.1"/>
    <property type="molecule type" value="Genomic_DNA"/>
</dbReference>
<dbReference type="EMBL" id="BC058875">
    <property type="protein sequence ID" value="AAH58875.1"/>
    <property type="molecule type" value="mRNA"/>
</dbReference>
<dbReference type="RefSeq" id="NP_956002.1">
    <property type="nucleotide sequence ID" value="NM_199708.1"/>
</dbReference>
<dbReference type="FunCoup" id="Q6PD83">
    <property type="interactions" value="2270"/>
</dbReference>
<dbReference type="STRING" id="7955.ENSDARP00000022789"/>
<dbReference type="PaxDb" id="7955-ENSDARP00000022789"/>
<dbReference type="Ensembl" id="ENSDART00000013575">
    <property type="protein sequence ID" value="ENSDARP00000022789"/>
    <property type="gene ID" value="ENSDARG00000010481"/>
</dbReference>
<dbReference type="GeneID" id="325226"/>
<dbReference type="KEGG" id="dre:325226"/>
<dbReference type="AGR" id="ZFIN:ZDB-GENE-030131-3951"/>
<dbReference type="CTD" id="325226"/>
<dbReference type="ZFIN" id="ZDB-GENE-030131-3951">
    <property type="gene designation" value="bzw1a"/>
</dbReference>
<dbReference type="eggNOG" id="KOG2297">
    <property type="taxonomic scope" value="Eukaryota"/>
</dbReference>
<dbReference type="HOGENOM" id="CLU_032849_0_1_1"/>
<dbReference type="InParanoid" id="Q6PD83"/>
<dbReference type="OMA" id="TEFCLFR"/>
<dbReference type="OrthoDB" id="1727522at2759"/>
<dbReference type="PhylomeDB" id="Q6PD83"/>
<dbReference type="TreeFam" id="TF324313"/>
<dbReference type="PRO" id="PR:Q6PD83"/>
<dbReference type="Proteomes" id="UP000000437">
    <property type="component" value="Chromosome 22"/>
</dbReference>
<dbReference type="Bgee" id="ENSDARG00000010481">
    <property type="expression patterns" value="Expressed in early embryo and 31 other cell types or tissues"/>
</dbReference>
<dbReference type="GO" id="GO:0005737">
    <property type="term" value="C:cytoplasm"/>
    <property type="evidence" value="ECO:0000318"/>
    <property type="project" value="GO_Central"/>
</dbReference>
<dbReference type="GO" id="GO:0006446">
    <property type="term" value="P:regulation of translational initiation"/>
    <property type="evidence" value="ECO:0000250"/>
    <property type="project" value="UniProtKB"/>
</dbReference>
<dbReference type="CDD" id="cd11560">
    <property type="entry name" value="W2_eIF5C_like"/>
    <property type="match status" value="1"/>
</dbReference>
<dbReference type="FunFam" id="1.25.40.180:FF:000006">
    <property type="entry name" value="Basic leucine zipper and W2 domain-containing protein 1"/>
    <property type="match status" value="1"/>
</dbReference>
<dbReference type="Gene3D" id="1.25.40.180">
    <property type="match status" value="1"/>
</dbReference>
<dbReference type="InterPro" id="IPR016024">
    <property type="entry name" value="ARM-type_fold"/>
</dbReference>
<dbReference type="InterPro" id="IPR051245">
    <property type="entry name" value="eIF5-mimic_regulator"/>
</dbReference>
<dbReference type="InterPro" id="IPR043510">
    <property type="entry name" value="W2_BZW1/2"/>
</dbReference>
<dbReference type="InterPro" id="IPR003307">
    <property type="entry name" value="W2_domain"/>
</dbReference>
<dbReference type="PANTHER" id="PTHR14208">
    <property type="entry name" value="BASIC LEUCINE ZIPPER AND W2 DOMAIN-CONTAINING PROTEIN"/>
    <property type="match status" value="1"/>
</dbReference>
<dbReference type="PANTHER" id="PTHR14208:SF0">
    <property type="entry name" value="EIF5-MIMIC PROTEIN 2"/>
    <property type="match status" value="1"/>
</dbReference>
<dbReference type="Pfam" id="PF25504">
    <property type="entry name" value="HEAT_5MP1_2"/>
    <property type="match status" value="1"/>
</dbReference>
<dbReference type="Pfam" id="PF02020">
    <property type="entry name" value="W2"/>
    <property type="match status" value="1"/>
</dbReference>
<dbReference type="SMART" id="SM00515">
    <property type="entry name" value="eIF5C"/>
    <property type="match status" value="1"/>
</dbReference>
<dbReference type="SUPFAM" id="SSF48371">
    <property type="entry name" value="ARM repeat"/>
    <property type="match status" value="1"/>
</dbReference>
<dbReference type="PROSITE" id="PS51363">
    <property type="entry name" value="W2"/>
    <property type="match status" value="1"/>
</dbReference>
<keyword id="KW-0010">Activator</keyword>
<keyword id="KW-1185">Reference proteome</keyword>
<keyword id="KW-0804">Transcription</keyword>
<keyword id="KW-0805">Transcription regulation</keyword>
<keyword id="KW-0810">Translation regulation</keyword>
<gene>
    <name type="primary">bzw1a</name>
    <name evidence="1" type="synonym">5mp2a</name>
    <name type="synonym">bzw1</name>
    <name type="ORF">si:ch211-246m6.3</name>
    <name type="ORF">zgc:63787</name>
</gene>
<accession>Q6PD83</accession>
<comment type="function">
    <text evidence="1">Translation initiation regulator which may repress repeat-associated non-AUG (RAN) initiated translation probably by acting as a competitive inhibitor of eukaryotic translation initiation factor 5 (EIF5) function (By similarity). Enhances histone H4 gene transcription but does not seem to bind DNA directly (By similarity).</text>
</comment>
<comment type="similarity">
    <text evidence="4">Belongs to the BZW family.</text>
</comment>
<proteinExistence type="evidence at transcript level"/>
<organism>
    <name type="scientific">Danio rerio</name>
    <name type="common">Zebrafish</name>
    <name type="synonym">Brachydanio rerio</name>
    <dbReference type="NCBI Taxonomy" id="7955"/>
    <lineage>
        <taxon>Eukaryota</taxon>
        <taxon>Metazoa</taxon>
        <taxon>Chordata</taxon>
        <taxon>Craniata</taxon>
        <taxon>Vertebrata</taxon>
        <taxon>Euteleostomi</taxon>
        <taxon>Actinopterygii</taxon>
        <taxon>Neopterygii</taxon>
        <taxon>Teleostei</taxon>
        <taxon>Ostariophysi</taxon>
        <taxon>Cypriniformes</taxon>
        <taxon>Danionidae</taxon>
        <taxon>Danioninae</taxon>
        <taxon>Danio</taxon>
    </lineage>
</organism>
<feature type="chain" id="PRO_0000254614" description="eIF5-mimic protein 2-A">
    <location>
        <begin position="1"/>
        <end position="419"/>
    </location>
</feature>
<feature type="domain" description="W2" evidence="2">
    <location>
        <begin position="247"/>
        <end position="414"/>
    </location>
</feature>
<feature type="region of interest" description="Disordered" evidence="3">
    <location>
        <begin position="1"/>
        <end position="29"/>
    </location>
</feature>
<feature type="compositionally biased region" description="Polar residues" evidence="3">
    <location>
        <begin position="1"/>
        <end position="15"/>
    </location>
</feature>
<reference key="1">
    <citation type="journal article" date="2013" name="Nature">
        <title>The zebrafish reference genome sequence and its relationship to the human genome.</title>
        <authorList>
            <person name="Howe K."/>
            <person name="Clark M.D."/>
            <person name="Torroja C.F."/>
            <person name="Torrance J."/>
            <person name="Berthelot C."/>
            <person name="Muffato M."/>
            <person name="Collins J.E."/>
            <person name="Humphray S."/>
            <person name="McLaren K."/>
            <person name="Matthews L."/>
            <person name="McLaren S."/>
            <person name="Sealy I."/>
            <person name="Caccamo M."/>
            <person name="Churcher C."/>
            <person name="Scott C."/>
            <person name="Barrett J.C."/>
            <person name="Koch R."/>
            <person name="Rauch G.J."/>
            <person name="White S."/>
            <person name="Chow W."/>
            <person name="Kilian B."/>
            <person name="Quintais L.T."/>
            <person name="Guerra-Assuncao J.A."/>
            <person name="Zhou Y."/>
            <person name="Gu Y."/>
            <person name="Yen J."/>
            <person name="Vogel J.H."/>
            <person name="Eyre T."/>
            <person name="Redmond S."/>
            <person name="Banerjee R."/>
            <person name="Chi J."/>
            <person name="Fu B."/>
            <person name="Langley E."/>
            <person name="Maguire S.F."/>
            <person name="Laird G.K."/>
            <person name="Lloyd D."/>
            <person name="Kenyon E."/>
            <person name="Donaldson S."/>
            <person name="Sehra H."/>
            <person name="Almeida-King J."/>
            <person name="Loveland J."/>
            <person name="Trevanion S."/>
            <person name="Jones M."/>
            <person name="Quail M."/>
            <person name="Willey D."/>
            <person name="Hunt A."/>
            <person name="Burton J."/>
            <person name="Sims S."/>
            <person name="McLay K."/>
            <person name="Plumb B."/>
            <person name="Davis J."/>
            <person name="Clee C."/>
            <person name="Oliver K."/>
            <person name="Clark R."/>
            <person name="Riddle C."/>
            <person name="Elliot D."/>
            <person name="Threadgold G."/>
            <person name="Harden G."/>
            <person name="Ware D."/>
            <person name="Begum S."/>
            <person name="Mortimore B."/>
            <person name="Kerry G."/>
            <person name="Heath P."/>
            <person name="Phillimore B."/>
            <person name="Tracey A."/>
            <person name="Corby N."/>
            <person name="Dunn M."/>
            <person name="Johnson C."/>
            <person name="Wood J."/>
            <person name="Clark S."/>
            <person name="Pelan S."/>
            <person name="Griffiths G."/>
            <person name="Smith M."/>
            <person name="Glithero R."/>
            <person name="Howden P."/>
            <person name="Barker N."/>
            <person name="Lloyd C."/>
            <person name="Stevens C."/>
            <person name="Harley J."/>
            <person name="Holt K."/>
            <person name="Panagiotidis G."/>
            <person name="Lovell J."/>
            <person name="Beasley H."/>
            <person name="Henderson C."/>
            <person name="Gordon D."/>
            <person name="Auger K."/>
            <person name="Wright D."/>
            <person name="Collins J."/>
            <person name="Raisen C."/>
            <person name="Dyer L."/>
            <person name="Leung K."/>
            <person name="Robertson L."/>
            <person name="Ambridge K."/>
            <person name="Leongamornlert D."/>
            <person name="McGuire S."/>
            <person name="Gilderthorp R."/>
            <person name="Griffiths C."/>
            <person name="Manthravadi D."/>
            <person name="Nichol S."/>
            <person name="Barker G."/>
            <person name="Whitehead S."/>
            <person name="Kay M."/>
            <person name="Brown J."/>
            <person name="Murnane C."/>
            <person name="Gray E."/>
            <person name="Humphries M."/>
            <person name="Sycamore N."/>
            <person name="Barker D."/>
            <person name="Saunders D."/>
            <person name="Wallis J."/>
            <person name="Babbage A."/>
            <person name="Hammond S."/>
            <person name="Mashreghi-Mohammadi M."/>
            <person name="Barr L."/>
            <person name="Martin S."/>
            <person name="Wray P."/>
            <person name="Ellington A."/>
            <person name="Matthews N."/>
            <person name="Ellwood M."/>
            <person name="Woodmansey R."/>
            <person name="Clark G."/>
            <person name="Cooper J."/>
            <person name="Tromans A."/>
            <person name="Grafham D."/>
            <person name="Skuce C."/>
            <person name="Pandian R."/>
            <person name="Andrews R."/>
            <person name="Harrison E."/>
            <person name="Kimberley A."/>
            <person name="Garnett J."/>
            <person name="Fosker N."/>
            <person name="Hall R."/>
            <person name="Garner P."/>
            <person name="Kelly D."/>
            <person name="Bird C."/>
            <person name="Palmer S."/>
            <person name="Gehring I."/>
            <person name="Berger A."/>
            <person name="Dooley C.M."/>
            <person name="Ersan-Urun Z."/>
            <person name="Eser C."/>
            <person name="Geiger H."/>
            <person name="Geisler M."/>
            <person name="Karotki L."/>
            <person name="Kirn A."/>
            <person name="Konantz J."/>
            <person name="Konantz M."/>
            <person name="Oberlander M."/>
            <person name="Rudolph-Geiger S."/>
            <person name="Teucke M."/>
            <person name="Lanz C."/>
            <person name="Raddatz G."/>
            <person name="Osoegawa K."/>
            <person name="Zhu B."/>
            <person name="Rapp A."/>
            <person name="Widaa S."/>
            <person name="Langford C."/>
            <person name="Yang F."/>
            <person name="Schuster S.C."/>
            <person name="Carter N.P."/>
            <person name="Harrow J."/>
            <person name="Ning Z."/>
            <person name="Herrero J."/>
            <person name="Searle S.M."/>
            <person name="Enright A."/>
            <person name="Geisler R."/>
            <person name="Plasterk R.H."/>
            <person name="Lee C."/>
            <person name="Westerfield M."/>
            <person name="de Jong P.J."/>
            <person name="Zon L.I."/>
            <person name="Postlethwait J.H."/>
            <person name="Nusslein-Volhard C."/>
            <person name="Hubbard T.J."/>
            <person name="Roest Crollius H."/>
            <person name="Rogers J."/>
            <person name="Stemple D.L."/>
        </authorList>
    </citation>
    <scope>NUCLEOTIDE SEQUENCE [LARGE SCALE GENOMIC DNA]</scope>
    <source>
        <strain>Tuebingen</strain>
    </source>
</reference>
<reference key="2">
    <citation type="submission" date="2003-10" db="EMBL/GenBank/DDBJ databases">
        <authorList>
            <consortium name="NIH - Zebrafish Gene Collection (ZGC) project"/>
        </authorList>
    </citation>
    <scope>NUCLEOTIDE SEQUENCE [LARGE SCALE MRNA]</scope>
    <source>
        <strain>AB</strain>
    </source>
</reference>
<name>5MP2A_DANRE</name>
<protein>
    <recommendedName>
        <fullName evidence="1">eIF5-mimic protein 2-A</fullName>
    </recommendedName>
    <alternativeName>
        <fullName>Basic leucine zipper and W2 domain-containing protein 1-A</fullName>
    </alternativeName>
</protein>
<sequence length="419" mass="48076">MNNQKQQKPTLTGQRFKTRKRDEKERFDPSQFQESIVQGLNQTGTDLEAVAKFLDASGAKLDYRRYAETLFDILVAGGMLAPGGTLSDDLTRTEYCLFTASEDLETMQAYAQVFNKLIRRYKYLEKGFEEEIKKLLLFLKGFTESERNKLAMLTGILLANGNISASILNSLFNENLVKEGVSAAFAVKLFKSWINEKDINSVAASLRKVGMDNRLMELFPANKRSCEHFSKYFTDAGLKELSDFARNQQSIGARKELQKELQEQMSRGETLKDIIAYVREEMKKTSISEQTMIGIVWTSVMSSVEWNKKEELVTEQAIKHLKQYSPLLKAFTSQGLSELTLLLKIQEYCYDNIHFMKAFQKIVVLLYKADVLSEEVILKWYTEGHVAKGKSVFLEQMKKFVEWLKNAEEESESEEEEGD</sequence>
<evidence type="ECO:0000250" key="1">
    <source>
        <dbReference type="UniProtKB" id="Q7L1Q6"/>
    </source>
</evidence>
<evidence type="ECO:0000255" key="2">
    <source>
        <dbReference type="PROSITE-ProRule" id="PRU00695"/>
    </source>
</evidence>
<evidence type="ECO:0000256" key="3">
    <source>
        <dbReference type="SAM" id="MobiDB-lite"/>
    </source>
</evidence>
<evidence type="ECO:0000305" key="4"/>